<comment type="function">
    <text evidence="1">May be involved in the modulation of rDNA transcription.</text>
</comment>
<comment type="similarity">
    <text evidence="4">Belongs to the RRT5 family.</text>
</comment>
<evidence type="ECO:0000250" key="1"/>
<evidence type="ECO:0000255" key="2">
    <source>
        <dbReference type="PROSITE-ProRule" id="PRU00176"/>
    </source>
</evidence>
<evidence type="ECO:0000256" key="3">
    <source>
        <dbReference type="SAM" id="MobiDB-lite"/>
    </source>
</evidence>
<evidence type="ECO:0000305" key="4"/>
<name>RRT5_YEAS1</name>
<reference key="1">
    <citation type="submission" date="2005-03" db="EMBL/GenBank/DDBJ databases">
        <title>Annotation of the Saccharomyces cerevisiae RM11-1a genome.</title>
        <authorList>
            <consortium name="The Broad Institute Genome Sequencing Platform"/>
            <person name="Birren B.W."/>
            <person name="Lander E.S."/>
            <person name="Galagan J.E."/>
            <person name="Nusbaum C."/>
            <person name="Devon K."/>
            <person name="Cuomo C."/>
            <person name="Jaffe D.B."/>
            <person name="Butler J."/>
            <person name="Alvarez P."/>
            <person name="Gnerre S."/>
            <person name="Grabherr M."/>
            <person name="Kleber M."/>
            <person name="Mauceli E.W."/>
            <person name="Brockman W."/>
            <person name="MacCallum I.A."/>
            <person name="Rounsley S."/>
            <person name="Young S.K."/>
            <person name="LaButti K."/>
            <person name="Pushparaj V."/>
            <person name="DeCaprio D."/>
            <person name="Crawford M."/>
            <person name="Koehrsen M."/>
            <person name="Engels R."/>
            <person name="Montgomery P."/>
            <person name="Pearson M."/>
            <person name="Howarth C."/>
            <person name="Larson L."/>
            <person name="Luoma S."/>
            <person name="White J."/>
            <person name="O'Leary S."/>
            <person name="Kodira C.D."/>
            <person name="Zeng Q."/>
            <person name="Yandava C."/>
            <person name="Alvarado L."/>
            <person name="Pratt S."/>
            <person name="Kruglyak L."/>
        </authorList>
    </citation>
    <scope>NUCLEOTIDE SEQUENCE [LARGE SCALE GENOMIC DNA]</scope>
    <source>
        <strain>RM11-1a</strain>
    </source>
</reference>
<protein>
    <recommendedName>
        <fullName>Regulator of rDNA transcription protein 5</fullName>
    </recommendedName>
</protein>
<feature type="chain" id="PRO_0000404361" description="Regulator of rDNA transcription protein 5">
    <location>
        <begin position="1"/>
        <end position="289"/>
    </location>
</feature>
<feature type="domain" description="RRM" evidence="2">
    <location>
        <begin position="18"/>
        <end position="105"/>
    </location>
</feature>
<feature type="region of interest" description="Disordered" evidence="3">
    <location>
        <begin position="235"/>
        <end position="289"/>
    </location>
</feature>
<feature type="compositionally biased region" description="Pro residues" evidence="3">
    <location>
        <begin position="239"/>
        <end position="255"/>
    </location>
</feature>
<feature type="compositionally biased region" description="Polar residues" evidence="3">
    <location>
        <begin position="279"/>
        <end position="289"/>
    </location>
</feature>
<sequence length="289" mass="31865">MTEQVNNDTTSDTTTTITTVYISNLPFTASERDLHAFLNNYGASSVLIPTQTVRRFSKRHNSNPRKPLGIAFAQFANNTLALKAIQDLNGTVFQNQKLFLKLHVPYEADSTPDTDVKKPKEKNKVKKTPETAADTVYCHDLPDDITDSEIRELFQLYSPQEIWIYRSKVYRRKCIPFAPHQITAALVTLQSETPIGDICDSVAKTATLRGKSIIVKPAYVSKIQEIKQLVKDNLTNARDPPPAALAEPAPAPAPVEPAEQVQEGQDNAETNDVPPPPASSSDRPTVAAT</sequence>
<gene>
    <name type="primary">RRT5</name>
    <name type="ORF">SCRG_05580</name>
</gene>
<accession>B3LUP1</accession>
<keyword id="KW-0694">RNA-binding</keyword>
<keyword id="KW-0804">Transcription</keyword>
<keyword id="KW-0805">Transcription regulation</keyword>
<dbReference type="EMBL" id="CH408057">
    <property type="protein sequence ID" value="EDV09872.1"/>
    <property type="molecule type" value="Genomic_DNA"/>
</dbReference>
<dbReference type="HOGENOM" id="CLU_042558_0_0_1"/>
<dbReference type="OrthoDB" id="7402at4893"/>
<dbReference type="Proteomes" id="UP000008335">
    <property type="component" value="Unassembled WGS sequence"/>
</dbReference>
<dbReference type="GO" id="GO:0005737">
    <property type="term" value="C:cytoplasm"/>
    <property type="evidence" value="ECO:0007669"/>
    <property type="project" value="TreeGrafter"/>
</dbReference>
<dbReference type="GO" id="GO:0005634">
    <property type="term" value="C:nucleus"/>
    <property type="evidence" value="ECO:0007669"/>
    <property type="project" value="TreeGrafter"/>
</dbReference>
<dbReference type="GO" id="GO:1990904">
    <property type="term" value="C:ribonucleoprotein complex"/>
    <property type="evidence" value="ECO:0007669"/>
    <property type="project" value="TreeGrafter"/>
</dbReference>
<dbReference type="GO" id="GO:0003729">
    <property type="term" value="F:mRNA binding"/>
    <property type="evidence" value="ECO:0007669"/>
    <property type="project" value="TreeGrafter"/>
</dbReference>
<dbReference type="CDD" id="cd12409">
    <property type="entry name" value="RRM1_RRT5"/>
    <property type="match status" value="1"/>
</dbReference>
<dbReference type="CDD" id="cd12410">
    <property type="entry name" value="RRM2_RRT5"/>
    <property type="match status" value="1"/>
</dbReference>
<dbReference type="FunFam" id="3.30.70.330:FF:000964">
    <property type="entry name" value="Regulator of rDNA transcription protein 5"/>
    <property type="match status" value="1"/>
</dbReference>
<dbReference type="Gene3D" id="3.30.70.330">
    <property type="match status" value="1"/>
</dbReference>
<dbReference type="InterPro" id="IPR012677">
    <property type="entry name" value="Nucleotide-bd_a/b_plait_sf"/>
</dbReference>
<dbReference type="InterPro" id="IPR035979">
    <property type="entry name" value="RBD_domain_sf"/>
</dbReference>
<dbReference type="InterPro" id="IPR000504">
    <property type="entry name" value="RRM_dom"/>
</dbReference>
<dbReference type="InterPro" id="IPR034244">
    <property type="entry name" value="Rrt5_RRM1"/>
</dbReference>
<dbReference type="InterPro" id="IPR034247">
    <property type="entry name" value="Rrt5_RRM2"/>
</dbReference>
<dbReference type="InterPro" id="IPR050374">
    <property type="entry name" value="RRT5_SRSF_SR"/>
</dbReference>
<dbReference type="PANTHER" id="PTHR23003:SF54">
    <property type="entry name" value="REGULATOR OF RDNA TRANSCRIPTION PROTEIN 5"/>
    <property type="match status" value="1"/>
</dbReference>
<dbReference type="PANTHER" id="PTHR23003">
    <property type="entry name" value="RNA RECOGNITION MOTIF RRM DOMAIN CONTAINING PROTEIN"/>
    <property type="match status" value="1"/>
</dbReference>
<dbReference type="Pfam" id="PF00076">
    <property type="entry name" value="RRM_1"/>
    <property type="match status" value="1"/>
</dbReference>
<dbReference type="SMART" id="SM00360">
    <property type="entry name" value="RRM"/>
    <property type="match status" value="1"/>
</dbReference>
<dbReference type="SUPFAM" id="SSF54928">
    <property type="entry name" value="RNA-binding domain, RBD"/>
    <property type="match status" value="1"/>
</dbReference>
<dbReference type="PROSITE" id="PS50102">
    <property type="entry name" value="RRM"/>
    <property type="match status" value="1"/>
</dbReference>
<proteinExistence type="inferred from homology"/>
<organism>
    <name type="scientific">Saccharomyces cerevisiae (strain RM11-1a)</name>
    <name type="common">Baker's yeast</name>
    <dbReference type="NCBI Taxonomy" id="285006"/>
    <lineage>
        <taxon>Eukaryota</taxon>
        <taxon>Fungi</taxon>
        <taxon>Dikarya</taxon>
        <taxon>Ascomycota</taxon>
        <taxon>Saccharomycotina</taxon>
        <taxon>Saccharomycetes</taxon>
        <taxon>Saccharomycetales</taxon>
        <taxon>Saccharomycetaceae</taxon>
        <taxon>Saccharomyces</taxon>
    </lineage>
</organism>